<reference key="1">
    <citation type="submission" date="2008-06" db="EMBL/GenBank/DDBJ databases">
        <title>Complete sequence of Chlorobium phaeobacteroides BS1.</title>
        <authorList>
            <consortium name="US DOE Joint Genome Institute"/>
            <person name="Lucas S."/>
            <person name="Copeland A."/>
            <person name="Lapidus A."/>
            <person name="Glavina del Rio T."/>
            <person name="Dalin E."/>
            <person name="Tice H."/>
            <person name="Bruce D."/>
            <person name="Goodwin L."/>
            <person name="Pitluck S."/>
            <person name="Schmutz J."/>
            <person name="Larimer F."/>
            <person name="Land M."/>
            <person name="Hauser L."/>
            <person name="Kyrpides N."/>
            <person name="Ovchinnikova G."/>
            <person name="Li T."/>
            <person name="Liu Z."/>
            <person name="Zhao F."/>
            <person name="Overmann J."/>
            <person name="Bryant D.A."/>
            <person name="Richardson P."/>
        </authorList>
    </citation>
    <scope>NUCLEOTIDE SEQUENCE [LARGE SCALE GENOMIC DNA]</scope>
    <source>
        <strain>BS1</strain>
    </source>
</reference>
<comment type="function">
    <text evidence="1">Catalyzes the transfer of an acyl group from acyl-phosphate (acyl-PO(4)) to glycerol-3-phosphate (G3P) to form lysophosphatidic acid (LPA). This enzyme utilizes acyl-phosphate as fatty acyl donor, but not acyl-CoA or acyl-ACP.</text>
</comment>
<comment type="catalytic activity">
    <reaction evidence="1">
        <text>an acyl phosphate + sn-glycerol 3-phosphate = a 1-acyl-sn-glycero-3-phosphate + phosphate</text>
        <dbReference type="Rhea" id="RHEA:34075"/>
        <dbReference type="ChEBI" id="CHEBI:43474"/>
        <dbReference type="ChEBI" id="CHEBI:57597"/>
        <dbReference type="ChEBI" id="CHEBI:57970"/>
        <dbReference type="ChEBI" id="CHEBI:59918"/>
        <dbReference type="EC" id="2.3.1.275"/>
    </reaction>
</comment>
<comment type="pathway">
    <text evidence="1">Lipid metabolism; phospholipid metabolism.</text>
</comment>
<comment type="subunit">
    <text evidence="1">Probably interacts with PlsX.</text>
</comment>
<comment type="subcellular location">
    <subcellularLocation>
        <location evidence="1">Cell inner membrane</location>
        <topology evidence="1">Multi-pass membrane protein</topology>
    </subcellularLocation>
</comment>
<comment type="similarity">
    <text evidence="1">Belongs to the PlsY family.</text>
</comment>
<keyword id="KW-0997">Cell inner membrane</keyword>
<keyword id="KW-1003">Cell membrane</keyword>
<keyword id="KW-0444">Lipid biosynthesis</keyword>
<keyword id="KW-0443">Lipid metabolism</keyword>
<keyword id="KW-0472">Membrane</keyword>
<keyword id="KW-0594">Phospholipid biosynthesis</keyword>
<keyword id="KW-1208">Phospholipid metabolism</keyword>
<keyword id="KW-0808">Transferase</keyword>
<keyword id="KW-0812">Transmembrane</keyword>
<keyword id="KW-1133">Transmembrane helix</keyword>
<name>PLSY_CHLPB</name>
<protein>
    <recommendedName>
        <fullName evidence="1">Glycerol-3-phosphate acyltransferase</fullName>
    </recommendedName>
    <alternativeName>
        <fullName evidence="1">Acyl-PO4 G3P acyltransferase</fullName>
    </alternativeName>
    <alternativeName>
        <fullName evidence="1">Acyl-phosphate--glycerol-3-phosphate acyltransferase</fullName>
    </alternativeName>
    <alternativeName>
        <fullName evidence="1">G3P acyltransferase</fullName>
        <shortName evidence="1">GPAT</shortName>
        <ecNumber evidence="1">2.3.1.275</ecNumber>
    </alternativeName>
    <alternativeName>
        <fullName evidence="1">Lysophosphatidic acid synthase</fullName>
        <shortName evidence="1">LPA synthase</shortName>
    </alternativeName>
</protein>
<organism>
    <name type="scientific">Chlorobium phaeobacteroides (strain BS1)</name>
    <dbReference type="NCBI Taxonomy" id="331678"/>
    <lineage>
        <taxon>Bacteria</taxon>
        <taxon>Pseudomonadati</taxon>
        <taxon>Chlorobiota</taxon>
        <taxon>Chlorobiia</taxon>
        <taxon>Chlorobiales</taxon>
        <taxon>Chlorobiaceae</taxon>
        <taxon>Chlorobium/Pelodictyon group</taxon>
        <taxon>Chlorobium</taxon>
    </lineage>
</organism>
<evidence type="ECO:0000255" key="1">
    <source>
        <dbReference type="HAMAP-Rule" id="MF_01043"/>
    </source>
</evidence>
<sequence>MFTLIVILAVSYLIGSIPTSIIAGRLLKGIDIRDFGSGNAGGTNAFRVLGWKAGLTVTILDIVKGAIAAISVVVFFESHPIGPLPDINPIALRLIAGLSAVFGHVFTVFAGFKGGKGVSTAAGMMFGIAPVTTLIVLGVFLLVVFLSRYVSVASILAAIAFPVIIAVRKYLFDLGEGLDYYIRMFNTNVFIHDSLDYHLLIFGFIVAAAIMYTHRANIRRLLSGKENRVKFHGHS</sequence>
<gene>
    <name evidence="1" type="primary">plsY</name>
    <name type="ordered locus">Cphamn1_2443</name>
</gene>
<accession>B3EPU8</accession>
<feature type="chain" id="PRO_1000136075" description="Glycerol-3-phosphate acyltransferase">
    <location>
        <begin position="1"/>
        <end position="235"/>
    </location>
</feature>
<feature type="transmembrane region" description="Helical" evidence="1">
    <location>
        <begin position="2"/>
        <end position="22"/>
    </location>
</feature>
<feature type="transmembrane region" description="Helical" evidence="1">
    <location>
        <begin position="56"/>
        <end position="76"/>
    </location>
</feature>
<feature type="transmembrane region" description="Helical" evidence="1">
    <location>
        <begin position="94"/>
        <end position="114"/>
    </location>
</feature>
<feature type="transmembrane region" description="Helical" evidence="1">
    <location>
        <begin position="126"/>
        <end position="146"/>
    </location>
</feature>
<feature type="transmembrane region" description="Helical" evidence="1">
    <location>
        <begin position="152"/>
        <end position="172"/>
    </location>
</feature>
<feature type="transmembrane region" description="Helical" evidence="1">
    <location>
        <begin position="190"/>
        <end position="210"/>
    </location>
</feature>
<dbReference type="EC" id="2.3.1.275" evidence="1"/>
<dbReference type="EMBL" id="CP001101">
    <property type="protein sequence ID" value="ACE05338.1"/>
    <property type="molecule type" value="Genomic_DNA"/>
</dbReference>
<dbReference type="SMR" id="B3EPU8"/>
<dbReference type="STRING" id="331678.Cphamn1_2443"/>
<dbReference type="KEGG" id="cpb:Cphamn1_2443"/>
<dbReference type="eggNOG" id="COG0344">
    <property type="taxonomic scope" value="Bacteria"/>
</dbReference>
<dbReference type="HOGENOM" id="CLU_081254_3_0_10"/>
<dbReference type="OrthoDB" id="9777124at2"/>
<dbReference type="UniPathway" id="UPA00085"/>
<dbReference type="GO" id="GO:0005886">
    <property type="term" value="C:plasma membrane"/>
    <property type="evidence" value="ECO:0007669"/>
    <property type="project" value="UniProtKB-SubCell"/>
</dbReference>
<dbReference type="GO" id="GO:0043772">
    <property type="term" value="F:acyl-phosphate glycerol-3-phosphate acyltransferase activity"/>
    <property type="evidence" value="ECO:0007669"/>
    <property type="project" value="UniProtKB-UniRule"/>
</dbReference>
<dbReference type="GO" id="GO:0008654">
    <property type="term" value="P:phospholipid biosynthetic process"/>
    <property type="evidence" value="ECO:0007669"/>
    <property type="project" value="UniProtKB-UniRule"/>
</dbReference>
<dbReference type="HAMAP" id="MF_01043">
    <property type="entry name" value="PlsY"/>
    <property type="match status" value="1"/>
</dbReference>
<dbReference type="InterPro" id="IPR003811">
    <property type="entry name" value="G3P_acylTferase_PlsY"/>
</dbReference>
<dbReference type="NCBIfam" id="TIGR00023">
    <property type="entry name" value="glycerol-3-phosphate 1-O-acyltransferase PlsY"/>
    <property type="match status" value="1"/>
</dbReference>
<dbReference type="PANTHER" id="PTHR30309:SF0">
    <property type="entry name" value="GLYCEROL-3-PHOSPHATE ACYLTRANSFERASE-RELATED"/>
    <property type="match status" value="1"/>
</dbReference>
<dbReference type="PANTHER" id="PTHR30309">
    <property type="entry name" value="INNER MEMBRANE PROTEIN YGIH"/>
    <property type="match status" value="1"/>
</dbReference>
<dbReference type="Pfam" id="PF02660">
    <property type="entry name" value="G3P_acyltransf"/>
    <property type="match status" value="1"/>
</dbReference>
<dbReference type="SMART" id="SM01207">
    <property type="entry name" value="G3P_acyltransf"/>
    <property type="match status" value="1"/>
</dbReference>
<proteinExistence type="inferred from homology"/>